<keyword id="KW-0046">Antibiotic resistance</keyword>
<keyword id="KW-0997">Cell inner membrane</keyword>
<keyword id="KW-1003">Cell membrane</keyword>
<keyword id="KW-0133">Cell shape</keyword>
<keyword id="KW-0961">Cell wall biogenesis/degradation</keyword>
<keyword id="KW-0378">Hydrolase</keyword>
<keyword id="KW-0472">Membrane</keyword>
<keyword id="KW-0573">Peptidoglycan synthesis</keyword>
<keyword id="KW-1185">Reference proteome</keyword>
<keyword id="KW-0812">Transmembrane</keyword>
<keyword id="KW-1133">Transmembrane helix</keyword>
<name>UPPP_METPP</name>
<proteinExistence type="inferred from homology"/>
<comment type="function">
    <text evidence="1">Catalyzes the dephosphorylation of undecaprenyl diphosphate (UPP). Confers resistance to bacitracin.</text>
</comment>
<comment type="catalytic activity">
    <reaction evidence="1">
        <text>di-trans,octa-cis-undecaprenyl diphosphate + H2O = di-trans,octa-cis-undecaprenyl phosphate + phosphate + H(+)</text>
        <dbReference type="Rhea" id="RHEA:28094"/>
        <dbReference type="ChEBI" id="CHEBI:15377"/>
        <dbReference type="ChEBI" id="CHEBI:15378"/>
        <dbReference type="ChEBI" id="CHEBI:43474"/>
        <dbReference type="ChEBI" id="CHEBI:58405"/>
        <dbReference type="ChEBI" id="CHEBI:60392"/>
        <dbReference type="EC" id="3.6.1.27"/>
    </reaction>
</comment>
<comment type="subcellular location">
    <subcellularLocation>
        <location evidence="1">Cell inner membrane</location>
        <topology evidence="1">Multi-pass membrane protein</topology>
    </subcellularLocation>
</comment>
<comment type="miscellaneous">
    <text>Bacitracin is thought to be involved in the inhibition of peptidoglycan synthesis by sequestering undecaprenyl diphosphate, thereby reducing the pool of lipid carrier available.</text>
</comment>
<comment type="similarity">
    <text evidence="1">Belongs to the UppP family.</text>
</comment>
<gene>
    <name evidence="1" type="primary">uppP</name>
    <name type="ordered locus">Mpe_A1046</name>
</gene>
<sequence length="285" mass="31022">MDILLLVKAAIMGIVEGLTEFLPISSTGHLILTASLLNFTGEIVKVFDIAIQTGAMFAVIWEYRVRLRATVAGITHEAVAQRFVRNLLIAFVPAVISGLALGGLIKEHLFHPVPVATAFVVGGLIILWVERRHRALFGDRDLEGGRVARVETIDDMSALDALKVGLVQCAALIPGTSRSGATIIGAMLFGFSRKAATEFSFFLGIPTLMGAGAYSLIKQRDLLSWGDLPVFAVGVVFAFLSALVCIRWLIRYVSTHDFTVFAWYRIAFGGLVLLSAWGGWVDWKD</sequence>
<dbReference type="EC" id="3.6.1.27" evidence="1"/>
<dbReference type="EMBL" id="CP000555">
    <property type="protein sequence ID" value="ABM94007.1"/>
    <property type="molecule type" value="Genomic_DNA"/>
</dbReference>
<dbReference type="RefSeq" id="WP_011828645.1">
    <property type="nucleotide sequence ID" value="NC_008825.1"/>
</dbReference>
<dbReference type="SMR" id="A2SEL8"/>
<dbReference type="STRING" id="420662.Mpe_A1046"/>
<dbReference type="KEGG" id="mpt:Mpe_A1046"/>
<dbReference type="eggNOG" id="COG1968">
    <property type="taxonomic scope" value="Bacteria"/>
</dbReference>
<dbReference type="HOGENOM" id="CLU_060296_2_0_4"/>
<dbReference type="Proteomes" id="UP000000366">
    <property type="component" value="Chromosome"/>
</dbReference>
<dbReference type="GO" id="GO:0005886">
    <property type="term" value="C:plasma membrane"/>
    <property type="evidence" value="ECO:0007669"/>
    <property type="project" value="UniProtKB-SubCell"/>
</dbReference>
<dbReference type="GO" id="GO:0050380">
    <property type="term" value="F:undecaprenyl-diphosphatase activity"/>
    <property type="evidence" value="ECO:0007669"/>
    <property type="project" value="UniProtKB-UniRule"/>
</dbReference>
<dbReference type="GO" id="GO:0071555">
    <property type="term" value="P:cell wall organization"/>
    <property type="evidence" value="ECO:0007669"/>
    <property type="project" value="UniProtKB-KW"/>
</dbReference>
<dbReference type="GO" id="GO:0009252">
    <property type="term" value="P:peptidoglycan biosynthetic process"/>
    <property type="evidence" value="ECO:0007669"/>
    <property type="project" value="UniProtKB-KW"/>
</dbReference>
<dbReference type="GO" id="GO:0008360">
    <property type="term" value="P:regulation of cell shape"/>
    <property type="evidence" value="ECO:0007669"/>
    <property type="project" value="UniProtKB-KW"/>
</dbReference>
<dbReference type="GO" id="GO:0046677">
    <property type="term" value="P:response to antibiotic"/>
    <property type="evidence" value="ECO:0007669"/>
    <property type="project" value="UniProtKB-UniRule"/>
</dbReference>
<dbReference type="HAMAP" id="MF_01006">
    <property type="entry name" value="Undec_diphosphatase"/>
    <property type="match status" value="1"/>
</dbReference>
<dbReference type="InterPro" id="IPR003824">
    <property type="entry name" value="UppP"/>
</dbReference>
<dbReference type="NCBIfam" id="NF001389">
    <property type="entry name" value="PRK00281.1-2"/>
    <property type="match status" value="1"/>
</dbReference>
<dbReference type="NCBIfam" id="NF001390">
    <property type="entry name" value="PRK00281.1-4"/>
    <property type="match status" value="1"/>
</dbReference>
<dbReference type="NCBIfam" id="TIGR00753">
    <property type="entry name" value="undec_PP_bacA"/>
    <property type="match status" value="1"/>
</dbReference>
<dbReference type="PANTHER" id="PTHR30622">
    <property type="entry name" value="UNDECAPRENYL-DIPHOSPHATASE"/>
    <property type="match status" value="1"/>
</dbReference>
<dbReference type="PANTHER" id="PTHR30622:SF3">
    <property type="entry name" value="UNDECAPRENYL-DIPHOSPHATASE"/>
    <property type="match status" value="1"/>
</dbReference>
<dbReference type="Pfam" id="PF02673">
    <property type="entry name" value="BacA"/>
    <property type="match status" value="1"/>
</dbReference>
<accession>A2SEL8</accession>
<feature type="chain" id="PRO_0000290727" description="Undecaprenyl-diphosphatase">
    <location>
        <begin position="1"/>
        <end position="285"/>
    </location>
</feature>
<feature type="transmembrane region" description="Helical" evidence="1">
    <location>
        <begin position="3"/>
        <end position="23"/>
    </location>
</feature>
<feature type="transmembrane region" description="Helical" evidence="1">
    <location>
        <begin position="41"/>
        <end position="61"/>
    </location>
</feature>
<feature type="transmembrane region" description="Helical" evidence="1">
    <location>
        <begin position="87"/>
        <end position="107"/>
    </location>
</feature>
<feature type="transmembrane region" description="Helical" evidence="1">
    <location>
        <begin position="109"/>
        <end position="129"/>
    </location>
</feature>
<feature type="transmembrane region" description="Helical" evidence="1">
    <location>
        <begin position="197"/>
        <end position="217"/>
    </location>
</feature>
<feature type="transmembrane region" description="Helical" evidence="1">
    <location>
        <begin position="226"/>
        <end position="246"/>
    </location>
</feature>
<feature type="transmembrane region" description="Helical" evidence="1">
    <location>
        <begin position="260"/>
        <end position="280"/>
    </location>
</feature>
<evidence type="ECO:0000255" key="1">
    <source>
        <dbReference type="HAMAP-Rule" id="MF_01006"/>
    </source>
</evidence>
<protein>
    <recommendedName>
        <fullName evidence="1">Undecaprenyl-diphosphatase</fullName>
        <ecNumber evidence="1">3.6.1.27</ecNumber>
    </recommendedName>
    <alternativeName>
        <fullName evidence="1">Bacitracin resistance protein</fullName>
    </alternativeName>
    <alternativeName>
        <fullName evidence="1">Undecaprenyl pyrophosphate phosphatase</fullName>
    </alternativeName>
</protein>
<organism>
    <name type="scientific">Methylibium petroleiphilum (strain ATCC BAA-1232 / LMG 22953 / PM1)</name>
    <dbReference type="NCBI Taxonomy" id="420662"/>
    <lineage>
        <taxon>Bacteria</taxon>
        <taxon>Pseudomonadati</taxon>
        <taxon>Pseudomonadota</taxon>
        <taxon>Betaproteobacteria</taxon>
        <taxon>Burkholderiales</taxon>
        <taxon>Sphaerotilaceae</taxon>
        <taxon>Methylibium</taxon>
    </lineage>
</organism>
<reference key="1">
    <citation type="journal article" date="2007" name="J. Bacteriol.">
        <title>Whole-genome analysis of the methyl tert-butyl ether-degrading beta-proteobacterium Methylibium petroleiphilum PM1.</title>
        <authorList>
            <person name="Kane S.R."/>
            <person name="Chakicherla A.Y."/>
            <person name="Chain P.S.G."/>
            <person name="Schmidt R."/>
            <person name="Shin M.W."/>
            <person name="Legler T.C."/>
            <person name="Scow K.M."/>
            <person name="Larimer F.W."/>
            <person name="Lucas S.M."/>
            <person name="Richardson P.M."/>
            <person name="Hristova K.R."/>
        </authorList>
    </citation>
    <scope>NUCLEOTIDE SEQUENCE [LARGE SCALE GENOMIC DNA]</scope>
    <source>
        <strain>ATCC BAA-1232 / LMG 22953 / PM1</strain>
    </source>
</reference>